<name>C3H12_ARATH</name>
<dbReference type="EMBL" id="AC007767">
    <property type="protein sequence ID" value="AAF81332.1"/>
    <property type="molecule type" value="Genomic_DNA"/>
</dbReference>
<dbReference type="EMBL" id="AC084110">
    <property type="protein sequence ID" value="AAG60171.1"/>
    <property type="molecule type" value="Genomic_DNA"/>
</dbReference>
<dbReference type="EMBL" id="CP002684">
    <property type="protein sequence ID" value="AEE31468.1"/>
    <property type="molecule type" value="Genomic_DNA"/>
</dbReference>
<dbReference type="EMBL" id="AK118013">
    <property type="protein sequence ID" value="BAC42646.1"/>
    <property type="molecule type" value="mRNA"/>
</dbReference>
<dbReference type="EMBL" id="AY056407">
    <property type="protein sequence ID" value="AAL08263.1"/>
    <property type="molecule type" value="mRNA"/>
</dbReference>
<dbReference type="EMBL" id="AY081710">
    <property type="protein sequence ID" value="AAL87363.1"/>
    <property type="molecule type" value="mRNA"/>
</dbReference>
<dbReference type="PIR" id="D86448">
    <property type="entry name" value="D86448"/>
</dbReference>
<dbReference type="RefSeq" id="NP_564396.1">
    <property type="nucleotide sequence ID" value="NM_102969.4"/>
</dbReference>
<dbReference type="BioGRID" id="25362">
    <property type="interactions" value="1"/>
</dbReference>
<dbReference type="FunCoup" id="Q9LQM3">
    <property type="interactions" value="1396"/>
</dbReference>
<dbReference type="IntAct" id="Q9LQM3">
    <property type="interactions" value="2"/>
</dbReference>
<dbReference type="STRING" id="3702.Q9LQM3"/>
<dbReference type="GlyGen" id="Q9LQM3">
    <property type="glycosylation" value="1 site, 1 O-linked glycan (1 site)"/>
</dbReference>
<dbReference type="iPTMnet" id="Q9LQM3"/>
<dbReference type="PaxDb" id="3702-AT1G32360.1"/>
<dbReference type="ProteomicsDB" id="239082"/>
<dbReference type="EnsemblPlants" id="AT1G32360.1">
    <property type="protein sequence ID" value="AT1G32360.1"/>
    <property type="gene ID" value="AT1G32360"/>
</dbReference>
<dbReference type="GeneID" id="840128"/>
<dbReference type="Gramene" id="AT1G32360.1">
    <property type="protein sequence ID" value="AT1G32360.1"/>
    <property type="gene ID" value="AT1G32360"/>
</dbReference>
<dbReference type="KEGG" id="ath:AT1G32360"/>
<dbReference type="Araport" id="AT1G32360"/>
<dbReference type="TAIR" id="AT1G32360"/>
<dbReference type="eggNOG" id="KOG1677">
    <property type="taxonomic scope" value="Eukaryota"/>
</dbReference>
<dbReference type="HOGENOM" id="CLU_060653_1_0_1"/>
<dbReference type="InParanoid" id="Q9LQM3"/>
<dbReference type="OMA" id="EMWATEE"/>
<dbReference type="PhylomeDB" id="Q9LQM3"/>
<dbReference type="PRO" id="PR:Q9LQM3"/>
<dbReference type="Proteomes" id="UP000006548">
    <property type="component" value="Chromosome 1"/>
</dbReference>
<dbReference type="ExpressionAtlas" id="Q9LQM3">
    <property type="expression patterns" value="baseline and differential"/>
</dbReference>
<dbReference type="GO" id="GO:0003700">
    <property type="term" value="F:DNA-binding transcription factor activity"/>
    <property type="evidence" value="ECO:0000250"/>
    <property type="project" value="TAIR"/>
</dbReference>
<dbReference type="GO" id="GO:0003729">
    <property type="term" value="F:mRNA binding"/>
    <property type="evidence" value="ECO:0007669"/>
    <property type="project" value="InterPro"/>
</dbReference>
<dbReference type="GO" id="GO:0000976">
    <property type="term" value="F:transcription cis-regulatory region binding"/>
    <property type="evidence" value="ECO:0000353"/>
    <property type="project" value="TAIR"/>
</dbReference>
<dbReference type="GO" id="GO:0008270">
    <property type="term" value="F:zinc ion binding"/>
    <property type="evidence" value="ECO:0007669"/>
    <property type="project" value="UniProtKB-KW"/>
</dbReference>
<dbReference type="GO" id="GO:0006355">
    <property type="term" value="P:regulation of DNA-templated transcription"/>
    <property type="evidence" value="ECO:0000304"/>
    <property type="project" value="TAIR"/>
</dbReference>
<dbReference type="FunFam" id="4.10.1000.10:FF:000016">
    <property type="entry name" value="Zinc finger CCCH domain-containing protein"/>
    <property type="match status" value="1"/>
</dbReference>
<dbReference type="FunFam" id="4.10.1000.10:FF:000001">
    <property type="entry name" value="zinc finger CCCH domain-containing protein 15-like"/>
    <property type="match status" value="1"/>
</dbReference>
<dbReference type="FunFam" id="4.10.1000.10:FF:000045">
    <property type="entry name" value="Zinc finger, CCCH-type"/>
    <property type="match status" value="1"/>
</dbReference>
<dbReference type="Gene3D" id="4.10.1000.10">
    <property type="entry name" value="Zinc finger, CCCH-type"/>
    <property type="match status" value="2"/>
</dbReference>
<dbReference type="InterPro" id="IPR045877">
    <property type="entry name" value="ZFP36-like"/>
</dbReference>
<dbReference type="InterPro" id="IPR041367">
    <property type="entry name" value="Znf-CCCH_4"/>
</dbReference>
<dbReference type="InterPro" id="IPR000571">
    <property type="entry name" value="Znf_CCCH"/>
</dbReference>
<dbReference type="InterPro" id="IPR036855">
    <property type="entry name" value="Znf_CCCH_sf"/>
</dbReference>
<dbReference type="PANTHER" id="PTHR12547">
    <property type="entry name" value="CCCH ZINC FINGER/TIS11-RELATED"/>
    <property type="match status" value="1"/>
</dbReference>
<dbReference type="Pfam" id="PF00642">
    <property type="entry name" value="zf-CCCH"/>
    <property type="match status" value="2"/>
</dbReference>
<dbReference type="Pfam" id="PF18044">
    <property type="entry name" value="zf-CCCH_4"/>
    <property type="match status" value="1"/>
</dbReference>
<dbReference type="SMART" id="SM00356">
    <property type="entry name" value="ZnF_C3H1"/>
    <property type="match status" value="3"/>
</dbReference>
<dbReference type="SUPFAM" id="SSF90229">
    <property type="entry name" value="CCCH zinc finger"/>
    <property type="match status" value="3"/>
</dbReference>
<dbReference type="PROSITE" id="PS50103">
    <property type="entry name" value="ZF_C3H1"/>
    <property type="match status" value="3"/>
</dbReference>
<proteinExistence type="evidence at transcript level"/>
<organism>
    <name type="scientific">Arabidopsis thaliana</name>
    <name type="common">Mouse-ear cress</name>
    <dbReference type="NCBI Taxonomy" id="3702"/>
    <lineage>
        <taxon>Eukaryota</taxon>
        <taxon>Viridiplantae</taxon>
        <taxon>Streptophyta</taxon>
        <taxon>Embryophyta</taxon>
        <taxon>Tracheophyta</taxon>
        <taxon>Spermatophyta</taxon>
        <taxon>Magnoliopsida</taxon>
        <taxon>eudicotyledons</taxon>
        <taxon>Gunneridae</taxon>
        <taxon>Pentapetalae</taxon>
        <taxon>rosids</taxon>
        <taxon>malvids</taxon>
        <taxon>Brassicales</taxon>
        <taxon>Brassicaceae</taxon>
        <taxon>Camelineae</taxon>
        <taxon>Arabidopsis</taxon>
    </lineage>
</organism>
<reference key="1">
    <citation type="journal article" date="2000" name="Nature">
        <title>Sequence and analysis of chromosome 1 of the plant Arabidopsis thaliana.</title>
        <authorList>
            <person name="Theologis A."/>
            <person name="Ecker J.R."/>
            <person name="Palm C.J."/>
            <person name="Federspiel N.A."/>
            <person name="Kaul S."/>
            <person name="White O."/>
            <person name="Alonso J."/>
            <person name="Altafi H."/>
            <person name="Araujo R."/>
            <person name="Bowman C.L."/>
            <person name="Brooks S.Y."/>
            <person name="Buehler E."/>
            <person name="Chan A."/>
            <person name="Chao Q."/>
            <person name="Chen H."/>
            <person name="Cheuk R.F."/>
            <person name="Chin C.W."/>
            <person name="Chung M.K."/>
            <person name="Conn L."/>
            <person name="Conway A.B."/>
            <person name="Conway A.R."/>
            <person name="Creasy T.H."/>
            <person name="Dewar K."/>
            <person name="Dunn P."/>
            <person name="Etgu P."/>
            <person name="Feldblyum T.V."/>
            <person name="Feng J.-D."/>
            <person name="Fong B."/>
            <person name="Fujii C.Y."/>
            <person name="Gill J.E."/>
            <person name="Goldsmith A.D."/>
            <person name="Haas B."/>
            <person name="Hansen N.F."/>
            <person name="Hughes B."/>
            <person name="Huizar L."/>
            <person name="Hunter J.L."/>
            <person name="Jenkins J."/>
            <person name="Johnson-Hopson C."/>
            <person name="Khan S."/>
            <person name="Khaykin E."/>
            <person name="Kim C.J."/>
            <person name="Koo H.L."/>
            <person name="Kremenetskaia I."/>
            <person name="Kurtz D.B."/>
            <person name="Kwan A."/>
            <person name="Lam B."/>
            <person name="Langin-Hooper S."/>
            <person name="Lee A."/>
            <person name="Lee J.M."/>
            <person name="Lenz C.A."/>
            <person name="Li J.H."/>
            <person name="Li Y.-P."/>
            <person name="Lin X."/>
            <person name="Liu S.X."/>
            <person name="Liu Z.A."/>
            <person name="Luros J.S."/>
            <person name="Maiti R."/>
            <person name="Marziali A."/>
            <person name="Militscher J."/>
            <person name="Miranda M."/>
            <person name="Nguyen M."/>
            <person name="Nierman W.C."/>
            <person name="Osborne B.I."/>
            <person name="Pai G."/>
            <person name="Peterson J."/>
            <person name="Pham P.K."/>
            <person name="Rizzo M."/>
            <person name="Rooney T."/>
            <person name="Rowley D."/>
            <person name="Sakano H."/>
            <person name="Salzberg S.L."/>
            <person name="Schwartz J.R."/>
            <person name="Shinn P."/>
            <person name="Southwick A.M."/>
            <person name="Sun H."/>
            <person name="Tallon L.J."/>
            <person name="Tambunga G."/>
            <person name="Toriumi M.J."/>
            <person name="Town C.D."/>
            <person name="Utterback T."/>
            <person name="Van Aken S."/>
            <person name="Vaysberg M."/>
            <person name="Vysotskaia V.S."/>
            <person name="Walker M."/>
            <person name="Wu D."/>
            <person name="Yu G."/>
            <person name="Fraser C.M."/>
            <person name="Venter J.C."/>
            <person name="Davis R.W."/>
        </authorList>
    </citation>
    <scope>NUCLEOTIDE SEQUENCE [LARGE SCALE GENOMIC DNA]</scope>
    <source>
        <strain>cv. Columbia</strain>
    </source>
</reference>
<reference key="2">
    <citation type="journal article" date="2017" name="Plant J.">
        <title>Araport11: a complete reannotation of the Arabidopsis thaliana reference genome.</title>
        <authorList>
            <person name="Cheng C.Y."/>
            <person name="Krishnakumar V."/>
            <person name="Chan A.P."/>
            <person name="Thibaud-Nissen F."/>
            <person name="Schobel S."/>
            <person name="Town C.D."/>
        </authorList>
    </citation>
    <scope>GENOME REANNOTATION</scope>
    <source>
        <strain>cv. Columbia</strain>
    </source>
</reference>
<reference key="3">
    <citation type="journal article" date="2002" name="Science">
        <title>Functional annotation of a full-length Arabidopsis cDNA collection.</title>
        <authorList>
            <person name="Seki M."/>
            <person name="Narusaka M."/>
            <person name="Kamiya A."/>
            <person name="Ishida J."/>
            <person name="Satou M."/>
            <person name="Sakurai T."/>
            <person name="Nakajima M."/>
            <person name="Enju A."/>
            <person name="Akiyama K."/>
            <person name="Oono Y."/>
            <person name="Muramatsu M."/>
            <person name="Hayashizaki Y."/>
            <person name="Kawai J."/>
            <person name="Carninci P."/>
            <person name="Itoh M."/>
            <person name="Ishii Y."/>
            <person name="Arakawa T."/>
            <person name="Shibata K."/>
            <person name="Shinagawa A."/>
            <person name="Shinozaki K."/>
        </authorList>
    </citation>
    <scope>NUCLEOTIDE SEQUENCE [LARGE SCALE MRNA]</scope>
    <source>
        <strain>cv. Columbia</strain>
    </source>
</reference>
<reference key="4">
    <citation type="journal article" date="2003" name="Science">
        <title>Empirical analysis of transcriptional activity in the Arabidopsis genome.</title>
        <authorList>
            <person name="Yamada K."/>
            <person name="Lim J."/>
            <person name="Dale J.M."/>
            <person name="Chen H."/>
            <person name="Shinn P."/>
            <person name="Palm C.J."/>
            <person name="Southwick A.M."/>
            <person name="Wu H.C."/>
            <person name="Kim C.J."/>
            <person name="Nguyen M."/>
            <person name="Pham P.K."/>
            <person name="Cheuk R.F."/>
            <person name="Karlin-Newmann G."/>
            <person name="Liu S.X."/>
            <person name="Lam B."/>
            <person name="Sakano H."/>
            <person name="Wu T."/>
            <person name="Yu G."/>
            <person name="Miranda M."/>
            <person name="Quach H.L."/>
            <person name="Tripp M."/>
            <person name="Chang C.H."/>
            <person name="Lee J.M."/>
            <person name="Toriumi M.J."/>
            <person name="Chan M.M."/>
            <person name="Tang C.C."/>
            <person name="Onodera C.S."/>
            <person name="Deng J.M."/>
            <person name="Akiyama K."/>
            <person name="Ansari Y."/>
            <person name="Arakawa T."/>
            <person name="Banh J."/>
            <person name="Banno F."/>
            <person name="Bowser L."/>
            <person name="Brooks S.Y."/>
            <person name="Carninci P."/>
            <person name="Chao Q."/>
            <person name="Choy N."/>
            <person name="Enju A."/>
            <person name="Goldsmith A.D."/>
            <person name="Gurjal M."/>
            <person name="Hansen N.F."/>
            <person name="Hayashizaki Y."/>
            <person name="Johnson-Hopson C."/>
            <person name="Hsuan V.W."/>
            <person name="Iida K."/>
            <person name="Karnes M."/>
            <person name="Khan S."/>
            <person name="Koesema E."/>
            <person name="Ishida J."/>
            <person name="Jiang P.X."/>
            <person name="Jones T."/>
            <person name="Kawai J."/>
            <person name="Kamiya A."/>
            <person name="Meyers C."/>
            <person name="Nakajima M."/>
            <person name="Narusaka M."/>
            <person name="Seki M."/>
            <person name="Sakurai T."/>
            <person name="Satou M."/>
            <person name="Tamse R."/>
            <person name="Vaysberg M."/>
            <person name="Wallender E.K."/>
            <person name="Wong C."/>
            <person name="Yamamura Y."/>
            <person name="Yuan S."/>
            <person name="Shinozaki K."/>
            <person name="Davis R.W."/>
            <person name="Theologis A."/>
            <person name="Ecker J.R."/>
        </authorList>
    </citation>
    <scope>NUCLEOTIDE SEQUENCE [LARGE SCALE MRNA]</scope>
    <source>
        <strain>cv. Columbia</strain>
    </source>
</reference>
<reference key="5">
    <citation type="journal article" date="2008" name="BMC Genomics">
        <title>Genome-wide analysis of CCCH zinc finger family in Arabidopsis and rice.</title>
        <authorList>
            <person name="Wang D."/>
            <person name="Guo Y."/>
            <person name="Wu C."/>
            <person name="Yang G."/>
            <person name="Li Y."/>
            <person name="Zheng C."/>
        </authorList>
    </citation>
    <scope>NOMENCLATURE</scope>
</reference>
<protein>
    <recommendedName>
        <fullName>Zinc finger CCCH domain-containing protein 12</fullName>
        <shortName>AtC3H12</shortName>
    </recommendedName>
</protein>
<keyword id="KW-0238">DNA-binding</keyword>
<keyword id="KW-0479">Metal-binding</keyword>
<keyword id="KW-1185">Reference proteome</keyword>
<keyword id="KW-0677">Repeat</keyword>
<keyword id="KW-0862">Zinc</keyword>
<keyword id="KW-0863">Zinc-finger</keyword>
<gene>
    <name type="ordered locus">At1g32360</name>
    <name type="ORF">F27G20.10</name>
    <name type="ORF">F5D14.12</name>
</gene>
<feature type="chain" id="PRO_0000371971" description="Zinc finger CCCH domain-containing protein 12">
    <location>
        <begin position="1"/>
        <end position="384"/>
    </location>
</feature>
<feature type="zinc finger region" description="C3H1-type 1" evidence="1">
    <location>
        <begin position="91"/>
        <end position="118"/>
    </location>
</feature>
<feature type="zinc finger region" description="C3H1-type 2" evidence="1">
    <location>
        <begin position="172"/>
        <end position="200"/>
    </location>
</feature>
<feature type="zinc finger region" description="C3H1-type 3" evidence="1">
    <location>
        <begin position="260"/>
        <end position="288"/>
    </location>
</feature>
<feature type="region of interest" description="Disordered" evidence="2">
    <location>
        <begin position="1"/>
        <end position="32"/>
    </location>
</feature>
<feature type="region of interest" description="Disordered" evidence="2">
    <location>
        <begin position="46"/>
        <end position="81"/>
    </location>
</feature>
<feature type="region of interest" description="Disordered" evidence="2">
    <location>
        <begin position="211"/>
        <end position="231"/>
    </location>
</feature>
<feature type="region of interest" description="Disordered" evidence="2">
    <location>
        <begin position="299"/>
        <end position="335"/>
    </location>
</feature>
<feature type="compositionally biased region" description="Polar residues" evidence="2">
    <location>
        <begin position="50"/>
        <end position="60"/>
    </location>
</feature>
<feature type="compositionally biased region" description="Low complexity" evidence="2">
    <location>
        <begin position="70"/>
        <end position="81"/>
    </location>
</feature>
<feature type="compositionally biased region" description="Gly residues" evidence="2">
    <location>
        <begin position="212"/>
        <end position="231"/>
    </location>
</feature>
<feature type="compositionally biased region" description="Polar residues" evidence="2">
    <location>
        <begin position="309"/>
        <end position="329"/>
    </location>
</feature>
<feature type="sequence conflict" description="In Ref. 4; AAL87363/AAL08263." evidence="3" ref="4">
    <original>D</original>
    <variation>G</variation>
    <location>
        <position position="11"/>
    </location>
</feature>
<evidence type="ECO:0000255" key="1">
    <source>
        <dbReference type="PROSITE-ProRule" id="PRU00723"/>
    </source>
</evidence>
<evidence type="ECO:0000256" key="2">
    <source>
        <dbReference type="SAM" id="MobiDB-lite"/>
    </source>
</evidence>
<evidence type="ECO:0000305" key="3"/>
<sequence length="384" mass="40706">MSHHRRDSGGDVVHVIPTNNPPPDNWFPNLGDSAVWATEDDYNRAWAMNPDNTSGDNNGPPNKKTRGSPSSSSATTTSAASNRTKAIGKMFFKTKLCCKFRAGTCPYITNCNFAHTVEELRRPPPNWQEIVAAHEEERSGGMGTPTVSVVEIPREEFQIPSLVSSTAESGRSFKGRHCKKFYTEEGCPYGESCTFLHDEASRNRESVAISLGPGGYGSGGGGGSGGGSVGGGGSSSNVVVLGGGGGSGSGSGIQILKPSNWKTRICNKWEITGYCPFGAKCHFAHGAAELHRFGGGLVEEEGKDGVSPNPDTKQTVQNPKGLSDTTTLLSPGVPHNADASYHTGVALQRASSAVTQKPGIRTHQKWKGPAKISRIYGDWIDDIE</sequence>
<accession>Q9LQM3</accession>
<accession>Q93ZP3</accession>